<accession>Q9SZJ2</accession>
<name>GRDP2_ARATH</name>
<keyword id="KW-0927">Auxin signaling pathway</keyword>
<keyword id="KW-1185">Reference proteome</keyword>
<keyword id="KW-0346">Stress response</keyword>
<proteinExistence type="evidence at transcript level"/>
<organism evidence="5">
    <name type="scientific">Arabidopsis thaliana</name>
    <name type="common">Mouse-ear cress</name>
    <dbReference type="NCBI Taxonomy" id="3702"/>
    <lineage>
        <taxon>Eukaryota</taxon>
        <taxon>Viridiplantae</taxon>
        <taxon>Streptophyta</taxon>
        <taxon>Embryophyta</taxon>
        <taxon>Tracheophyta</taxon>
        <taxon>Spermatophyta</taxon>
        <taxon>Magnoliopsida</taxon>
        <taxon>eudicotyledons</taxon>
        <taxon>Gunneridae</taxon>
        <taxon>Pentapetalae</taxon>
        <taxon>rosids</taxon>
        <taxon>malvids</taxon>
        <taxon>Brassicales</taxon>
        <taxon>Brassicaceae</taxon>
        <taxon>Camelineae</taxon>
        <taxon>Arabidopsis</taxon>
    </lineage>
</organism>
<feature type="chain" id="PRO_0000432853" description="Glycine-rich domain-containing protein 2">
    <location>
        <begin position="1"/>
        <end position="787"/>
    </location>
</feature>
<protein>
    <recommendedName>
        <fullName evidence="2">Glycine-rich domain-containing protein 2</fullName>
        <shortName evidence="2">AtGRDP2</shortName>
    </recommendedName>
</protein>
<comment type="function">
    <text evidence="1">Involved in development and stress responses, probably through an auxin-dependent mechanism.</text>
</comment>
<comment type="tissue specificity">
    <text evidence="1">Expressed in leaves, inflorescences, buds, flowers and immature siliques.</text>
</comment>
<comment type="developmental stage">
    <text evidence="1">Developmentally regulated, with the highest expression in flowers and immature siliques.</text>
</comment>
<comment type="induction">
    <text evidence="1">up-regulated upon auxin treatment.</text>
</comment>
<comment type="disruption phenotype">
    <text evidence="1">Delayed growth and development. Late flowering and increased sensitivity to salt stress.</text>
</comment>
<evidence type="ECO:0000269" key="1">
    <source>
    </source>
</evidence>
<evidence type="ECO:0000303" key="2">
    <source>
    </source>
</evidence>
<evidence type="ECO:0000312" key="3">
    <source>
        <dbReference type="Araport" id="AT4G37900"/>
    </source>
</evidence>
<evidence type="ECO:0000312" key="4">
    <source>
        <dbReference type="EMBL" id="CAB37530.1"/>
    </source>
</evidence>
<evidence type="ECO:0000312" key="5">
    <source>
        <dbReference type="Proteomes" id="UP000006548"/>
    </source>
</evidence>
<dbReference type="EMBL" id="AL035538">
    <property type="protein sequence ID" value="CAB37530.1"/>
    <property type="molecule type" value="Genomic_DNA"/>
</dbReference>
<dbReference type="EMBL" id="AL161592">
    <property type="protein sequence ID" value="CAB80455.1"/>
    <property type="molecule type" value="Genomic_DNA"/>
</dbReference>
<dbReference type="EMBL" id="CP002687">
    <property type="protein sequence ID" value="AEE86851.1"/>
    <property type="molecule type" value="Genomic_DNA"/>
</dbReference>
<dbReference type="EMBL" id="CP002687">
    <property type="protein sequence ID" value="ANM67181.1"/>
    <property type="molecule type" value="Genomic_DNA"/>
</dbReference>
<dbReference type="PIR" id="T05617">
    <property type="entry name" value="T05617"/>
</dbReference>
<dbReference type="RefSeq" id="NP_001329025.1">
    <property type="nucleotide sequence ID" value="NM_001342460.1"/>
</dbReference>
<dbReference type="RefSeq" id="NP_195503.1">
    <property type="nucleotide sequence ID" value="NM_119951.3"/>
</dbReference>
<dbReference type="SMR" id="Q9SZJ2"/>
<dbReference type="FunCoup" id="Q9SZJ2">
    <property type="interactions" value="139"/>
</dbReference>
<dbReference type="STRING" id="3702.Q9SZJ2"/>
<dbReference type="PaxDb" id="3702-AT4G37900.1"/>
<dbReference type="ProteomicsDB" id="222354"/>
<dbReference type="EnsemblPlants" id="AT4G37900.1">
    <property type="protein sequence ID" value="AT4G37900.1"/>
    <property type="gene ID" value="AT4G37900"/>
</dbReference>
<dbReference type="EnsemblPlants" id="AT4G37900.2">
    <property type="protein sequence ID" value="AT4G37900.2"/>
    <property type="gene ID" value="AT4G37900"/>
</dbReference>
<dbReference type="GeneID" id="829946"/>
<dbReference type="Gramene" id="AT4G37900.1">
    <property type="protein sequence ID" value="AT4G37900.1"/>
    <property type="gene ID" value="AT4G37900"/>
</dbReference>
<dbReference type="Gramene" id="AT4G37900.2">
    <property type="protein sequence ID" value="AT4G37900.2"/>
    <property type="gene ID" value="AT4G37900"/>
</dbReference>
<dbReference type="KEGG" id="ath:AT4G37900"/>
<dbReference type="Araport" id="AT4G37900"/>
<dbReference type="TAIR" id="AT4G37900">
    <property type="gene designation" value="ATGRDP2"/>
</dbReference>
<dbReference type="eggNOG" id="ENOG502QRQZ">
    <property type="taxonomic scope" value="Eukaryota"/>
</dbReference>
<dbReference type="HOGENOM" id="CLU_011059_0_0_1"/>
<dbReference type="InParanoid" id="Q9SZJ2"/>
<dbReference type="OMA" id="NGHANCG"/>
<dbReference type="PhylomeDB" id="Q9SZJ2"/>
<dbReference type="PRO" id="PR:Q9SZJ2"/>
<dbReference type="Proteomes" id="UP000006548">
    <property type="component" value="Chromosome 4"/>
</dbReference>
<dbReference type="ExpressionAtlas" id="Q9SZJ2">
    <property type="expression patterns" value="baseline and differential"/>
</dbReference>
<dbReference type="GO" id="GO:0009734">
    <property type="term" value="P:auxin-activated signaling pathway"/>
    <property type="evidence" value="ECO:0007669"/>
    <property type="project" value="UniProtKB-KW"/>
</dbReference>
<dbReference type="GO" id="GO:0071470">
    <property type="term" value="P:cellular response to osmotic stress"/>
    <property type="evidence" value="ECO:0000315"/>
    <property type="project" value="UniProtKB"/>
</dbReference>
<dbReference type="GO" id="GO:0010928">
    <property type="term" value="P:regulation of auxin mediated signaling pathway"/>
    <property type="evidence" value="ECO:0000315"/>
    <property type="project" value="UniProtKB"/>
</dbReference>
<dbReference type="GO" id="GO:2000028">
    <property type="term" value="P:regulation of photoperiodism, flowering"/>
    <property type="evidence" value="ECO:0000315"/>
    <property type="project" value="TAIR"/>
</dbReference>
<dbReference type="InterPro" id="IPR009836">
    <property type="entry name" value="GRDP-like"/>
</dbReference>
<dbReference type="PANTHER" id="PTHR34365">
    <property type="entry name" value="ENOLASE (DUF1399)"/>
    <property type="match status" value="1"/>
</dbReference>
<dbReference type="PANTHER" id="PTHR34365:SF6">
    <property type="entry name" value="GLYCINE-RICH DOMAIN-CONTAINING PROTEIN 2"/>
    <property type="match status" value="1"/>
</dbReference>
<dbReference type="Pfam" id="PF25334">
    <property type="entry name" value="C2_GRDP"/>
    <property type="match status" value="1"/>
</dbReference>
<dbReference type="Pfam" id="PF07173">
    <property type="entry name" value="GRDP-like"/>
    <property type="match status" value="2"/>
</dbReference>
<dbReference type="Pfam" id="PF25335">
    <property type="entry name" value="GRDP_C"/>
    <property type="match status" value="1"/>
</dbReference>
<gene>
    <name evidence="2" type="primary">GRDP2</name>
    <name evidence="3" type="ordered locus">At4g37900</name>
    <name evidence="4" type="ORF">F20D10.20</name>
</gene>
<sequence>MDKEKEQTLEWNEAQKIDISVDLLAAAKKHLLFLGAVDRNRCLYDGPALQRAIYRYNAYWLPLLAQYTESSSICQGPLVPPLDCEWVWHCHRLNPVRYKTDCEQFYGRVLDNSGVVSSVNGNCKSQTETLWKRLYPTEPYDLDFANAISEPADVSALEKCTTYDLVLAVKRQSPFFYQVSRAHVDNDVFLQEAVARYKAFLYLIKGNRERSIKLFCVPTYDIDLIWHTHQLHAISYCNDLTKMIGKVLEHDDTDSDRSKGKKLDTGFSGTTAQWEETFGRRYWKAGAMNRGNTPKPVTTSPYVCSGKKSIAKEEESQNVIQYPEVKVIEVILEIVGVKNLPDAHKGKVFVLFSKTQPDSLFNAERRLTVLSESCGEKQVALFQCEPTGELSFQLMSSKSKSLGFTSLSFSEFLSPVTKLSVEKWLELTPTKRGKADDPNPISLRVAVSFTPPTRSPTVLHLVQARPSLKGSCFLPMLRKVRLAKSFTRVVDETETEVINLQMRNSNDAAPKGDRRQVIGVKECGETYVLAEYDGTFWSLLDSKWSLKQTCNPATDGPLFELSGTRMVKVYSGRKLEYEPKHCSKLRSEQDFMTAVEFSKQHPYGKAVGLLDLKFGSIEANEKWLVLPGMVSSFILSDLLKKEGFSAAAKDTVKANGITEESTEIDVLSQEKLEEETMMDVDTTTPVAVAAEKINGGARCFSKELSGNMIEEEGGHCGGCGGCGGCGGGGGCGGGGRCGGMTKIEGCGGGSCTGGSTGCGNCGGGCGNMMKNNANGNAPSVENDAVTA</sequence>
<reference key="1">
    <citation type="journal article" date="1999" name="Nature">
        <title>Sequence and analysis of chromosome 4 of the plant Arabidopsis thaliana.</title>
        <authorList>
            <person name="Mayer K.F.X."/>
            <person name="Schueller C."/>
            <person name="Wambutt R."/>
            <person name="Murphy G."/>
            <person name="Volckaert G."/>
            <person name="Pohl T."/>
            <person name="Duesterhoeft A."/>
            <person name="Stiekema W."/>
            <person name="Entian K.-D."/>
            <person name="Terryn N."/>
            <person name="Harris B."/>
            <person name="Ansorge W."/>
            <person name="Brandt P."/>
            <person name="Grivell L.A."/>
            <person name="Rieger M."/>
            <person name="Weichselgartner M."/>
            <person name="de Simone V."/>
            <person name="Obermaier B."/>
            <person name="Mache R."/>
            <person name="Mueller M."/>
            <person name="Kreis M."/>
            <person name="Delseny M."/>
            <person name="Puigdomenech P."/>
            <person name="Watson M."/>
            <person name="Schmidtheini T."/>
            <person name="Reichert B."/>
            <person name="Portetelle D."/>
            <person name="Perez-Alonso M."/>
            <person name="Boutry M."/>
            <person name="Bancroft I."/>
            <person name="Vos P."/>
            <person name="Hoheisel J."/>
            <person name="Zimmermann W."/>
            <person name="Wedler H."/>
            <person name="Ridley P."/>
            <person name="Langham S.-A."/>
            <person name="McCullagh B."/>
            <person name="Bilham L."/>
            <person name="Robben J."/>
            <person name="van der Schueren J."/>
            <person name="Grymonprez B."/>
            <person name="Chuang Y.-J."/>
            <person name="Vandenbussche F."/>
            <person name="Braeken M."/>
            <person name="Weltjens I."/>
            <person name="Voet M."/>
            <person name="Bastiaens I."/>
            <person name="Aert R."/>
            <person name="Defoor E."/>
            <person name="Weitzenegger T."/>
            <person name="Bothe G."/>
            <person name="Ramsperger U."/>
            <person name="Hilbert H."/>
            <person name="Braun M."/>
            <person name="Holzer E."/>
            <person name="Brandt A."/>
            <person name="Peters S."/>
            <person name="van Staveren M."/>
            <person name="Dirkse W."/>
            <person name="Mooijman P."/>
            <person name="Klein Lankhorst R."/>
            <person name="Rose M."/>
            <person name="Hauf J."/>
            <person name="Koetter P."/>
            <person name="Berneiser S."/>
            <person name="Hempel S."/>
            <person name="Feldpausch M."/>
            <person name="Lamberth S."/>
            <person name="Van den Daele H."/>
            <person name="De Keyser A."/>
            <person name="Buysshaert C."/>
            <person name="Gielen J."/>
            <person name="Villarroel R."/>
            <person name="De Clercq R."/>
            <person name="van Montagu M."/>
            <person name="Rogers J."/>
            <person name="Cronin A."/>
            <person name="Quail M.A."/>
            <person name="Bray-Allen S."/>
            <person name="Clark L."/>
            <person name="Doggett J."/>
            <person name="Hall S."/>
            <person name="Kay M."/>
            <person name="Lennard N."/>
            <person name="McLay K."/>
            <person name="Mayes R."/>
            <person name="Pettett A."/>
            <person name="Rajandream M.A."/>
            <person name="Lyne M."/>
            <person name="Benes V."/>
            <person name="Rechmann S."/>
            <person name="Borkova D."/>
            <person name="Bloecker H."/>
            <person name="Scharfe M."/>
            <person name="Grimm M."/>
            <person name="Loehnert T.-H."/>
            <person name="Dose S."/>
            <person name="de Haan M."/>
            <person name="Maarse A.C."/>
            <person name="Schaefer M."/>
            <person name="Mueller-Auer S."/>
            <person name="Gabel C."/>
            <person name="Fuchs M."/>
            <person name="Fartmann B."/>
            <person name="Granderath K."/>
            <person name="Dauner D."/>
            <person name="Herzl A."/>
            <person name="Neumann S."/>
            <person name="Argiriou A."/>
            <person name="Vitale D."/>
            <person name="Liguori R."/>
            <person name="Piravandi E."/>
            <person name="Massenet O."/>
            <person name="Quigley F."/>
            <person name="Clabauld G."/>
            <person name="Muendlein A."/>
            <person name="Felber R."/>
            <person name="Schnabl S."/>
            <person name="Hiller R."/>
            <person name="Schmidt W."/>
            <person name="Lecharny A."/>
            <person name="Aubourg S."/>
            <person name="Chefdor F."/>
            <person name="Cooke R."/>
            <person name="Berger C."/>
            <person name="Monfort A."/>
            <person name="Casacuberta E."/>
            <person name="Gibbons T."/>
            <person name="Weber N."/>
            <person name="Vandenbol M."/>
            <person name="Bargues M."/>
            <person name="Terol J."/>
            <person name="Torres A."/>
            <person name="Perez-Perez A."/>
            <person name="Purnelle B."/>
            <person name="Bent E."/>
            <person name="Johnson S."/>
            <person name="Tacon D."/>
            <person name="Jesse T."/>
            <person name="Heijnen L."/>
            <person name="Schwarz S."/>
            <person name="Scholler P."/>
            <person name="Heber S."/>
            <person name="Francs P."/>
            <person name="Bielke C."/>
            <person name="Frishman D."/>
            <person name="Haase D."/>
            <person name="Lemcke K."/>
            <person name="Mewes H.-W."/>
            <person name="Stocker S."/>
            <person name="Zaccaria P."/>
            <person name="Bevan M."/>
            <person name="Wilson R.K."/>
            <person name="de la Bastide M."/>
            <person name="Habermann K."/>
            <person name="Parnell L."/>
            <person name="Dedhia N."/>
            <person name="Gnoj L."/>
            <person name="Schutz K."/>
            <person name="Huang E."/>
            <person name="Spiegel L."/>
            <person name="Sekhon M."/>
            <person name="Murray J."/>
            <person name="Sheet P."/>
            <person name="Cordes M."/>
            <person name="Abu-Threideh J."/>
            <person name="Stoneking T."/>
            <person name="Kalicki J."/>
            <person name="Graves T."/>
            <person name="Harmon G."/>
            <person name="Edwards J."/>
            <person name="Latreille P."/>
            <person name="Courtney L."/>
            <person name="Cloud J."/>
            <person name="Abbott A."/>
            <person name="Scott K."/>
            <person name="Johnson D."/>
            <person name="Minx P."/>
            <person name="Bentley D."/>
            <person name="Fulton B."/>
            <person name="Miller N."/>
            <person name="Greco T."/>
            <person name="Kemp K."/>
            <person name="Kramer J."/>
            <person name="Fulton L."/>
            <person name="Mardis E."/>
            <person name="Dante M."/>
            <person name="Pepin K."/>
            <person name="Hillier L.W."/>
            <person name="Nelson J."/>
            <person name="Spieth J."/>
            <person name="Ryan E."/>
            <person name="Andrews S."/>
            <person name="Geisel C."/>
            <person name="Layman D."/>
            <person name="Du H."/>
            <person name="Ali J."/>
            <person name="Berghoff A."/>
            <person name="Jones K."/>
            <person name="Drone K."/>
            <person name="Cotton M."/>
            <person name="Joshu C."/>
            <person name="Antonoiu B."/>
            <person name="Zidanic M."/>
            <person name="Strong C."/>
            <person name="Sun H."/>
            <person name="Lamar B."/>
            <person name="Yordan C."/>
            <person name="Ma P."/>
            <person name="Zhong J."/>
            <person name="Preston R."/>
            <person name="Vil D."/>
            <person name="Shekher M."/>
            <person name="Matero A."/>
            <person name="Shah R."/>
            <person name="Swaby I.K."/>
            <person name="O'Shaughnessy A."/>
            <person name="Rodriguez M."/>
            <person name="Hoffman J."/>
            <person name="Till S."/>
            <person name="Granat S."/>
            <person name="Shohdy N."/>
            <person name="Hasegawa A."/>
            <person name="Hameed A."/>
            <person name="Lodhi M."/>
            <person name="Johnson A."/>
            <person name="Chen E."/>
            <person name="Marra M.A."/>
            <person name="Martienssen R."/>
            <person name="McCombie W.R."/>
        </authorList>
    </citation>
    <scope>NUCLEOTIDE SEQUENCE [LARGE SCALE GENOMIC DNA]</scope>
    <source>
        <strain>cv. Columbia</strain>
    </source>
</reference>
<reference key="2">
    <citation type="journal article" date="2017" name="Plant J.">
        <title>Araport11: a complete reannotation of the Arabidopsis thaliana reference genome.</title>
        <authorList>
            <person name="Cheng C.Y."/>
            <person name="Krishnakumar V."/>
            <person name="Chan A.P."/>
            <person name="Thibaud-Nissen F."/>
            <person name="Schobel S."/>
            <person name="Town C.D."/>
        </authorList>
    </citation>
    <scope>GENOME REANNOTATION</scope>
    <source>
        <strain>cv. Columbia</strain>
    </source>
</reference>
<reference key="3">
    <citation type="journal article" date="2014" name="Front. Plant Sci.">
        <title>Overexpression of AtGRDP2, a novel glycine-rich domain protein, accelerates plant growth and improves stress tolerance.</title>
        <authorList>
            <person name="Ortega-Amaro M.A."/>
            <person name="Rodriguez-Hernandez A.A."/>
            <person name="Rodriguez-Kessler M."/>
            <person name="Hernandez-Lucero E."/>
            <person name="Rosales-Mendoza S."/>
            <person name="Ibanez-Salazar A."/>
            <person name="Delgado-Sanchez P."/>
            <person name="Jimenez-Bremont J.F."/>
        </authorList>
    </citation>
    <scope>FUNCTION</scope>
    <scope>DISRUPTION PHENOTYPE</scope>
    <scope>TISSUE SPECIFICITY</scope>
    <scope>DEVELOPMENTAL STAGE</scope>
    <scope>INDUCTION BY AUXIN</scope>
    <source>
        <strain>cv. Columbia</strain>
    </source>
</reference>